<accession>Q3ARA7</accession>
<protein>
    <recommendedName>
        <fullName evidence="1">Homoserine O-acetyltransferase</fullName>
        <shortName evidence="1">HAT</shortName>
        <ecNumber evidence="1">2.3.1.31</ecNumber>
    </recommendedName>
    <alternativeName>
        <fullName evidence="1">Homoserine transacetylase</fullName>
        <shortName evidence="1">HTA</shortName>
    </alternativeName>
</protein>
<feature type="chain" id="PRO_0000231867" description="Homoserine O-acetyltransferase">
    <location>
        <begin position="1"/>
        <end position="357"/>
    </location>
</feature>
<feature type="domain" description="AB hydrolase-1" evidence="1">
    <location>
        <begin position="51"/>
        <end position="340"/>
    </location>
</feature>
<feature type="active site" description="Nucleophile" evidence="1">
    <location>
        <position position="147"/>
    </location>
</feature>
<feature type="active site" evidence="1">
    <location>
        <position position="306"/>
    </location>
</feature>
<feature type="active site" evidence="1">
    <location>
        <position position="335"/>
    </location>
</feature>
<feature type="binding site" evidence="1">
    <location>
        <position position="216"/>
    </location>
    <ligand>
        <name>substrate</name>
    </ligand>
</feature>
<feature type="binding site" evidence="1">
    <location>
        <position position="336"/>
    </location>
    <ligand>
        <name>substrate</name>
    </ligand>
</feature>
<organism>
    <name type="scientific">Chlorobium chlorochromatii (strain CaD3)</name>
    <dbReference type="NCBI Taxonomy" id="340177"/>
    <lineage>
        <taxon>Bacteria</taxon>
        <taxon>Pseudomonadati</taxon>
        <taxon>Chlorobiota</taxon>
        <taxon>Chlorobiia</taxon>
        <taxon>Chlorobiales</taxon>
        <taxon>Chlorobiaceae</taxon>
        <taxon>Chlorobium/Pelodictyon group</taxon>
        <taxon>Chlorobium</taxon>
    </lineage>
</organism>
<dbReference type="EC" id="2.3.1.31" evidence="1"/>
<dbReference type="EMBL" id="CP000108">
    <property type="protein sequence ID" value="ABB28468.1"/>
    <property type="molecule type" value="Genomic_DNA"/>
</dbReference>
<dbReference type="SMR" id="Q3ARA7"/>
<dbReference type="STRING" id="340177.Cag_1206"/>
<dbReference type="ESTHER" id="chlch-metx">
    <property type="family name" value="Homoserine_transacetylase"/>
</dbReference>
<dbReference type="KEGG" id="cch:Cag_1206"/>
<dbReference type="eggNOG" id="COG2021">
    <property type="taxonomic scope" value="Bacteria"/>
</dbReference>
<dbReference type="HOGENOM" id="CLU_028760_1_2_10"/>
<dbReference type="OrthoDB" id="9800754at2"/>
<dbReference type="UniPathway" id="UPA00051">
    <property type="reaction ID" value="UER00074"/>
</dbReference>
<dbReference type="GO" id="GO:0005737">
    <property type="term" value="C:cytoplasm"/>
    <property type="evidence" value="ECO:0007669"/>
    <property type="project" value="UniProtKB-SubCell"/>
</dbReference>
<dbReference type="GO" id="GO:0004414">
    <property type="term" value="F:homoserine O-acetyltransferase activity"/>
    <property type="evidence" value="ECO:0007669"/>
    <property type="project" value="UniProtKB-UniRule"/>
</dbReference>
<dbReference type="GO" id="GO:0009092">
    <property type="term" value="P:homoserine metabolic process"/>
    <property type="evidence" value="ECO:0007669"/>
    <property type="project" value="TreeGrafter"/>
</dbReference>
<dbReference type="GO" id="GO:0009086">
    <property type="term" value="P:methionine biosynthetic process"/>
    <property type="evidence" value="ECO:0007669"/>
    <property type="project" value="UniProtKB-UniRule"/>
</dbReference>
<dbReference type="Gene3D" id="3.40.50.1820">
    <property type="entry name" value="alpha/beta hydrolase"/>
    <property type="match status" value="1"/>
</dbReference>
<dbReference type="HAMAP" id="MF_00296">
    <property type="entry name" value="MetX_acyltransf"/>
    <property type="match status" value="1"/>
</dbReference>
<dbReference type="InterPro" id="IPR000073">
    <property type="entry name" value="AB_hydrolase_1"/>
</dbReference>
<dbReference type="InterPro" id="IPR029058">
    <property type="entry name" value="AB_hydrolase_fold"/>
</dbReference>
<dbReference type="InterPro" id="IPR008220">
    <property type="entry name" value="HAT_MetX-like"/>
</dbReference>
<dbReference type="NCBIfam" id="TIGR01392">
    <property type="entry name" value="homoserO_Ac_trn"/>
    <property type="match status" value="1"/>
</dbReference>
<dbReference type="NCBIfam" id="NF001209">
    <property type="entry name" value="PRK00175.1"/>
    <property type="match status" value="1"/>
</dbReference>
<dbReference type="PANTHER" id="PTHR32268">
    <property type="entry name" value="HOMOSERINE O-ACETYLTRANSFERASE"/>
    <property type="match status" value="1"/>
</dbReference>
<dbReference type="PANTHER" id="PTHR32268:SF11">
    <property type="entry name" value="HOMOSERINE O-ACETYLTRANSFERASE"/>
    <property type="match status" value="1"/>
</dbReference>
<dbReference type="Pfam" id="PF00561">
    <property type="entry name" value="Abhydrolase_1"/>
    <property type="match status" value="1"/>
</dbReference>
<dbReference type="PIRSF" id="PIRSF000443">
    <property type="entry name" value="Homoser_Ac_trans"/>
    <property type="match status" value="1"/>
</dbReference>
<dbReference type="SUPFAM" id="SSF53474">
    <property type="entry name" value="alpha/beta-Hydrolases"/>
    <property type="match status" value="1"/>
</dbReference>
<gene>
    <name evidence="1" type="primary">metXA</name>
    <name type="ordered locus">Cag_1206</name>
</gene>
<reference key="1">
    <citation type="submission" date="2005-08" db="EMBL/GenBank/DDBJ databases">
        <title>Complete sequence of Chlorobium chlorochromatii CaD3.</title>
        <authorList>
            <consortium name="US DOE Joint Genome Institute"/>
            <person name="Copeland A."/>
            <person name="Lucas S."/>
            <person name="Lapidus A."/>
            <person name="Barry K."/>
            <person name="Detter J.C."/>
            <person name="Glavina T."/>
            <person name="Hammon N."/>
            <person name="Israni S."/>
            <person name="Pitluck S."/>
            <person name="Bryant D."/>
            <person name="Schmutz J."/>
            <person name="Larimer F."/>
            <person name="Land M."/>
            <person name="Kyrpides N."/>
            <person name="Ivanova N."/>
            <person name="Richardson P."/>
        </authorList>
    </citation>
    <scope>NUCLEOTIDE SEQUENCE [LARGE SCALE GENOMIC DNA]</scope>
    <source>
        <strain>CaD3</strain>
    </source>
</reference>
<proteinExistence type="inferred from homology"/>
<sequence length="357" mass="40036">MMCMKALEALVSPQTLFYTSNEPFITEFGATLPELQVAYRMWGRLNADKSNVIVICHALTGSADADDWWEGMFGTGKAFDPSEYCIICSNVLGSCYGTTGPTSPNPATGNRYGADFPLITIRDMVRVQHRLLTALGIERIKLVVGASLGGMQVLEWGFLYPEMAQALMAMGASGRHSAWCIGQSEAQRQAIYADRHWNGGSYAPEQPPNHGLAAARMMAMCSYRSFENYQERFGRTMQQGRQGALFSIESYLHHQGRKLVERFDANTYVTLTKAMDMHDVARGRGEYEEVLRSMTLPIEVLSINSDILYPMEEQEELAELMPNASILYLDEPYGHDAFLIEVEKVNQMVNDFLNKLE</sequence>
<name>METXA_CHLCH</name>
<evidence type="ECO:0000255" key="1">
    <source>
        <dbReference type="HAMAP-Rule" id="MF_00296"/>
    </source>
</evidence>
<comment type="function">
    <text evidence="1">Transfers an acetyl group from acetyl-CoA to L-homoserine, forming acetyl-L-homoserine.</text>
</comment>
<comment type="catalytic activity">
    <reaction evidence="1">
        <text>L-homoserine + acetyl-CoA = O-acetyl-L-homoserine + CoA</text>
        <dbReference type="Rhea" id="RHEA:13701"/>
        <dbReference type="ChEBI" id="CHEBI:57287"/>
        <dbReference type="ChEBI" id="CHEBI:57288"/>
        <dbReference type="ChEBI" id="CHEBI:57476"/>
        <dbReference type="ChEBI" id="CHEBI:57716"/>
        <dbReference type="EC" id="2.3.1.31"/>
    </reaction>
</comment>
<comment type="pathway">
    <text evidence="1">Amino-acid biosynthesis; L-methionine biosynthesis via de novo pathway; O-acetyl-L-homoserine from L-homoserine: step 1/1.</text>
</comment>
<comment type="subunit">
    <text evidence="1">Homodimer.</text>
</comment>
<comment type="subcellular location">
    <subcellularLocation>
        <location evidence="1">Cytoplasm</location>
    </subcellularLocation>
</comment>
<comment type="similarity">
    <text evidence="1">Belongs to the AB hydrolase superfamily. MetX family.</text>
</comment>
<keyword id="KW-0012">Acyltransferase</keyword>
<keyword id="KW-0028">Amino-acid biosynthesis</keyword>
<keyword id="KW-0963">Cytoplasm</keyword>
<keyword id="KW-0486">Methionine biosynthesis</keyword>
<keyword id="KW-0808">Transferase</keyword>